<evidence type="ECO:0000255" key="1"/>
<evidence type="ECO:0000255" key="2">
    <source>
        <dbReference type="PROSITE-ProRule" id="PRU00124"/>
    </source>
</evidence>
<evidence type="ECO:0000256" key="3">
    <source>
        <dbReference type="SAM" id="MobiDB-lite"/>
    </source>
</evidence>
<evidence type="ECO:0000269" key="4">
    <source>
    </source>
</evidence>
<evidence type="ECO:0000269" key="5">
    <source>
    </source>
</evidence>
<evidence type="ECO:0000305" key="6"/>
<reference key="1">
    <citation type="journal article" date="1994" name="Nature">
        <title>2.2 Mb of contiguous nucleotide sequence from chromosome III of C. elegans.</title>
        <authorList>
            <person name="Wilson R."/>
            <person name="Ainscough R."/>
            <person name="Anderson K."/>
            <person name="Baynes C."/>
            <person name="Berks M."/>
            <person name="Bonfield J."/>
            <person name="Burton J."/>
            <person name="Connell M."/>
            <person name="Copsey T."/>
            <person name="Cooper J."/>
            <person name="Coulson A."/>
            <person name="Craxton M."/>
            <person name="Dear S."/>
            <person name="Du Z."/>
            <person name="Durbin R."/>
            <person name="Favello A."/>
            <person name="Fraser A."/>
            <person name="Fulton L."/>
            <person name="Gardner A."/>
            <person name="Green P."/>
            <person name="Hawkins T."/>
            <person name="Hillier L."/>
            <person name="Jier M."/>
            <person name="Johnston L."/>
            <person name="Jones M."/>
            <person name="Kershaw J."/>
            <person name="Kirsten J."/>
            <person name="Laisster N."/>
            <person name="Latreille P."/>
            <person name="Lightning J."/>
            <person name="Lloyd C."/>
            <person name="Mortimore B."/>
            <person name="O'Callaghan M."/>
            <person name="Parsons J."/>
            <person name="Percy C."/>
            <person name="Rifken L."/>
            <person name="Roopra A."/>
            <person name="Saunders D."/>
            <person name="Shownkeen R."/>
            <person name="Sims M."/>
            <person name="Smaldon N."/>
            <person name="Smith A."/>
            <person name="Smith M."/>
            <person name="Sonnhammer E."/>
            <person name="Staden R."/>
            <person name="Sulston J."/>
            <person name="Thierry-Mieg J."/>
            <person name="Thomas K."/>
            <person name="Vaudin M."/>
            <person name="Vaughan K."/>
            <person name="Waterston R."/>
            <person name="Watson A."/>
            <person name="Weinstock L."/>
            <person name="Wilkinson-Sproat J."/>
            <person name="Wohldman P."/>
        </authorList>
    </citation>
    <scope>NUCLEOTIDE SEQUENCE [LARGE SCALE GENOMIC DNA]</scope>
    <source>
        <strain>Bristol N2</strain>
    </source>
</reference>
<reference key="2">
    <citation type="journal article" date="1998" name="Science">
        <title>Genome sequence of the nematode C. elegans: a platform for investigating biology.</title>
        <authorList>
            <consortium name="The C. elegans sequencing consortium"/>
        </authorList>
    </citation>
    <scope>NUCLEOTIDE SEQUENCE [LARGE SCALE GENOMIC DNA]</scope>
    <source>
        <strain>Bristol N2</strain>
    </source>
</reference>
<reference key="3">
    <citation type="journal article" date="2003" name="Nat. Biotechnol.">
        <title>Lectin affinity capture, isotope-coded tagging and mass spectrometry to identify N-linked glycoproteins.</title>
        <authorList>
            <person name="Kaji H."/>
            <person name="Saito H."/>
            <person name="Yamauchi Y."/>
            <person name="Shinkawa T."/>
            <person name="Taoka M."/>
            <person name="Hirabayashi J."/>
            <person name="Kasai K."/>
            <person name="Takahashi N."/>
            <person name="Isobe T."/>
        </authorList>
    </citation>
    <scope>GLYCOSYLATION [LARGE SCALE ANALYSIS] AT ASN-79</scope>
    <scope>IDENTIFICATION BY MASS SPECTROMETRY</scope>
    <source>
        <strain>Bristol N2</strain>
    </source>
</reference>
<reference key="4">
    <citation type="journal article" date="2007" name="Mol. Cell. Proteomics">
        <title>Proteomics reveals N-linked glycoprotein diversity in Caenorhabditis elegans and suggests an atypical translocation mechanism for integral membrane proteins.</title>
        <authorList>
            <person name="Kaji H."/>
            <person name="Kamiie J."/>
            <person name="Kawakami H."/>
            <person name="Kido K."/>
            <person name="Yamauchi Y."/>
            <person name="Shinkawa T."/>
            <person name="Taoka M."/>
            <person name="Takahashi N."/>
            <person name="Isobe T."/>
        </authorList>
    </citation>
    <scope>GLYCOSYLATION [LARGE SCALE ANALYSIS] AT ASN-79</scope>
    <scope>IDENTIFICATION BY MASS SPECTROMETRY</scope>
    <source>
        <strain>Bristol N2</strain>
    </source>
</reference>
<keyword id="KW-0175">Coiled coil</keyword>
<keyword id="KW-1015">Disulfide bond</keyword>
<keyword id="KW-0325">Glycoprotein</keyword>
<keyword id="KW-0472">Membrane</keyword>
<keyword id="KW-1185">Reference proteome</keyword>
<keyword id="KW-0812">Transmembrane</keyword>
<keyword id="KW-1133">Transmembrane helix</keyword>
<accession>P34434</accession>
<accession>Q8TA82</accession>
<comment type="subcellular location">
    <subcellularLocation>
        <location evidence="6">Membrane</location>
        <topology evidence="6">Single-pass membrane protein</topology>
    </subcellularLocation>
</comment>
<gene>
    <name type="ORF">F44E2.4</name>
</gene>
<proteinExistence type="evidence at protein level"/>
<sequence>MATSAVQSAACPPNTFTCADGSCIPSDWKGDGEKDCEDGSDEEAVTGETTTKFDEVVSAPTTPGSDEDCDWGMQQRIDNCSEPIVHFLSQIERLNLKNMSFLTSSEIQSRFEAGCNLMTTYQECVGNQKGCMPDEGVHSWGEVEVFMCQLVLPSVKEHAGCFKSSADPRCDASKTSSSSTLCGLVTSIQTATSCLETIRPETCSSDAIEMLSPIREETEHIVSAIRCVTPEQHASSTTLIVDETTESTSASAEDDDDDVLTTNTSEESTATTAHDEEVENKPALNINMADAVNSLYYIYDICSANYSADPFAAIADKICAKQDEIAKWSNCYQKTLEKEKCAIRNATSKCEALISYNNNLDCAIVTMNDECEVDAQNLVVELQEEVNDLIIAGKCFEDKKEEEKEPVNDGDFHLQSTLPKCTEEQENGALGCLVELVEINKKLTAFANLNFLLEIASPNSTVVEGICSLFARYEQCLSATVFKNSQRCSFASPLNSLARIGLAPICSLDSRPLLSKHRDCFEKLATEADEDTNCQSSLSTLSNTVQMMLQGVHGEALLCKSFYTIRDTFTCGERAVKNKCEADALTDLLSLKTKMTSLGEEEGCPRDPPANLDEIISRPVARPTPVTMPPRAPTAKPLPIPSAPTPPVASSKCSIEDQKKFEECVKPLTSFQPHPLSVIAIPRDIDQACEAFHTFKACSAESNCHPLWARGMSAMFEYACNEANEQFKKVRKCIRETSMIEEVRSCVSDFSRGAPTAACMSSNRLHSCAIPQIQGKCGQDAADWVSNYIIRFANAIDVRCKVGRQLPVGRVVGIGCSAEEESIIEHCAAPLNDIGSRVEELFAGGMQSLIKNINSLAPVFAGACNLTDEFKTCAHFLLEGRTSCVVSSCMVEAGRGICQLSDPAKAIDDNLSCLFGQAQEPKFAQCIRSTISTLKQFNLSTLRAVLPKFIDCTRDIVVAKCGESPIKIMKAMSTPDICPIRPHQAPIVPINQPARVTPTLETVLSSSTMVSTSSESDSESAPEQETEPTVPSTTETTESPSTPTDGCGESGLVEYLQCETHLDQFAFRPISIIGDASKWDQFCQMANQTYIPCVEGLKCKYEPAASAQIGLIDSICNRKITLKDQKQHGMCLSEYTKSDAGVACISDFGKIDQLDSSSPAQMCDGINQVMRCSTSEIEKRCGFDAVLHVFSIHMHWANLFNASCILESPEPTKDSTSIDVNEVEPSRDQKPVVVTKDETTPVSITTAMNNDITESETTQSPPVQSSVSFHIILAALIPFFALF</sequence>
<organism>
    <name type="scientific">Caenorhabditis elegans</name>
    <dbReference type="NCBI Taxonomy" id="6239"/>
    <lineage>
        <taxon>Eukaryota</taxon>
        <taxon>Metazoa</taxon>
        <taxon>Ecdysozoa</taxon>
        <taxon>Nematoda</taxon>
        <taxon>Chromadorea</taxon>
        <taxon>Rhabditida</taxon>
        <taxon>Rhabditina</taxon>
        <taxon>Rhabditomorpha</taxon>
        <taxon>Rhabditoidea</taxon>
        <taxon>Rhabditidae</taxon>
        <taxon>Peloderinae</taxon>
        <taxon>Caenorhabditis</taxon>
    </lineage>
</organism>
<protein>
    <recommendedName>
        <fullName>Uncharacterized protein F44E2.4</fullName>
    </recommendedName>
</protein>
<name>YL54_CAEEL</name>
<feature type="chain" id="PRO_0000065345" description="Uncharacterized protein F44E2.4">
    <location>
        <begin position="1"/>
        <end position="1283"/>
    </location>
</feature>
<feature type="transmembrane region" description="Helical" evidence="1">
    <location>
        <begin position="1263"/>
        <end position="1283"/>
    </location>
</feature>
<feature type="domain" description="LDL-receptor class A" evidence="2">
    <location>
        <begin position="10"/>
        <end position="46"/>
    </location>
</feature>
<feature type="region of interest" description="Disordered" evidence="3">
    <location>
        <begin position="27"/>
        <end position="47"/>
    </location>
</feature>
<feature type="region of interest" description="Disordered" evidence="3">
    <location>
        <begin position="236"/>
        <end position="278"/>
    </location>
</feature>
<feature type="region of interest" description="Disordered" evidence="3">
    <location>
        <begin position="621"/>
        <end position="651"/>
    </location>
</feature>
<feature type="region of interest" description="Disordered" evidence="3">
    <location>
        <begin position="1005"/>
        <end position="1046"/>
    </location>
</feature>
<feature type="coiled-coil region" evidence="1">
    <location>
        <begin position="332"/>
        <end position="389"/>
    </location>
</feature>
<feature type="compositionally biased region" description="Acidic residues" evidence="3">
    <location>
        <begin position="34"/>
        <end position="45"/>
    </location>
</feature>
<feature type="compositionally biased region" description="Low complexity" evidence="3">
    <location>
        <begin position="261"/>
        <end position="272"/>
    </location>
</feature>
<feature type="compositionally biased region" description="Pro residues" evidence="3">
    <location>
        <begin position="626"/>
        <end position="647"/>
    </location>
</feature>
<feature type="compositionally biased region" description="Low complexity" evidence="3">
    <location>
        <begin position="1005"/>
        <end position="1015"/>
    </location>
</feature>
<feature type="compositionally biased region" description="Acidic residues" evidence="3">
    <location>
        <begin position="1016"/>
        <end position="1026"/>
    </location>
</feature>
<feature type="compositionally biased region" description="Low complexity" evidence="3">
    <location>
        <begin position="1027"/>
        <end position="1044"/>
    </location>
</feature>
<feature type="glycosylation site" description="N-linked (GlcNAc...) asparagine" evidence="4 5">
    <location>
        <position position="79"/>
    </location>
</feature>
<feature type="disulfide bond" evidence="2">
    <location>
        <begin position="11"/>
        <end position="23"/>
    </location>
</feature>
<feature type="disulfide bond" evidence="2">
    <location>
        <begin position="18"/>
        <end position="36"/>
    </location>
</feature>
<dbReference type="EMBL" id="FO081383">
    <property type="protein sequence ID" value="CCD71222.1"/>
    <property type="molecule type" value="Genomic_DNA"/>
</dbReference>
<dbReference type="PIR" id="S44821">
    <property type="entry name" value="S44821"/>
</dbReference>
<dbReference type="RefSeq" id="NP_498952.1">
    <property type="nucleotide sequence ID" value="NM_066551.8"/>
</dbReference>
<dbReference type="SMR" id="P34434"/>
<dbReference type="BioGRID" id="41445">
    <property type="interactions" value="1"/>
</dbReference>
<dbReference type="FunCoup" id="P34434">
    <property type="interactions" value="211"/>
</dbReference>
<dbReference type="STRING" id="6239.F44E2.4.1"/>
<dbReference type="iPTMnet" id="P34434"/>
<dbReference type="PaxDb" id="6239-F44E2.4"/>
<dbReference type="PeptideAtlas" id="P34434"/>
<dbReference type="EnsemblMetazoa" id="F44E2.4.1">
    <property type="protein sequence ID" value="F44E2.4.1"/>
    <property type="gene ID" value="WBGene00018418"/>
</dbReference>
<dbReference type="GeneID" id="176243"/>
<dbReference type="KEGG" id="cel:CELE_F44E2.4"/>
<dbReference type="UCSC" id="F44E2.4">
    <property type="organism name" value="c. elegans"/>
</dbReference>
<dbReference type="AGR" id="WB:WBGene00018418"/>
<dbReference type="CTD" id="176243"/>
<dbReference type="WormBase" id="F44E2.4">
    <property type="protein sequence ID" value="CE28232"/>
    <property type="gene ID" value="WBGene00018418"/>
</dbReference>
<dbReference type="eggNOG" id="KOG3593">
    <property type="taxonomic scope" value="Eukaryota"/>
</dbReference>
<dbReference type="HOGENOM" id="CLU_006565_0_0_1"/>
<dbReference type="InParanoid" id="P34434"/>
<dbReference type="OMA" id="IGLAPIC"/>
<dbReference type="OrthoDB" id="9991628at2759"/>
<dbReference type="PRO" id="PR:P34434"/>
<dbReference type="Proteomes" id="UP000001940">
    <property type="component" value="Chromosome III"/>
</dbReference>
<dbReference type="Bgee" id="WBGene00018418">
    <property type="expression patterns" value="Expressed in embryo and 3 other cell types or tissues"/>
</dbReference>
<dbReference type="GO" id="GO:0016020">
    <property type="term" value="C:membrane"/>
    <property type="evidence" value="ECO:0007669"/>
    <property type="project" value="UniProtKB-SubCell"/>
</dbReference>
<dbReference type="CDD" id="cd00112">
    <property type="entry name" value="LDLa"/>
    <property type="match status" value="1"/>
</dbReference>
<dbReference type="Gene3D" id="4.10.400.10">
    <property type="entry name" value="Low-density Lipoprotein Receptor"/>
    <property type="match status" value="1"/>
</dbReference>
<dbReference type="InterPro" id="IPR036055">
    <property type="entry name" value="LDL_receptor-like_sf"/>
</dbReference>
<dbReference type="InterPro" id="IPR002172">
    <property type="entry name" value="LDrepeatLR_classA_rpt"/>
</dbReference>
<dbReference type="PANTHER" id="PTHR37431:SF5">
    <property type="entry name" value="PROTEIN CBG06905"/>
    <property type="match status" value="1"/>
</dbReference>
<dbReference type="PANTHER" id="PTHR37431">
    <property type="entry name" value="PROTEIN CBG06927"/>
    <property type="match status" value="1"/>
</dbReference>
<dbReference type="Pfam" id="PF00057">
    <property type="entry name" value="Ldl_recept_a"/>
    <property type="match status" value="1"/>
</dbReference>
<dbReference type="SMART" id="SM00192">
    <property type="entry name" value="LDLa"/>
    <property type="match status" value="1"/>
</dbReference>
<dbReference type="SUPFAM" id="SSF57424">
    <property type="entry name" value="LDL receptor-like module"/>
    <property type="match status" value="1"/>
</dbReference>
<dbReference type="PROSITE" id="PS50068">
    <property type="entry name" value="LDLRA_2"/>
    <property type="match status" value="1"/>
</dbReference>